<evidence type="ECO:0000255" key="1">
    <source>
        <dbReference type="HAMAP-Rule" id="MF_01365"/>
    </source>
</evidence>
<evidence type="ECO:0000305" key="2"/>
<proteinExistence type="inferred from homology"/>
<sequence>MSRIGNKVITLPAGVEIINKDNVVTVKGPKGELTREFNKNIGITVEGTEVTVTRPNDSKEMKTIHGTTRANLNNMVVGVSEGFKKALEMRGVGYRAQLQGSKLVLSVGKSHQDEVEAPEGVTFEVPTPTTINVIGINKESVGQTAAYVRSLRSPEPYKGKGIRYVGEFVRRKEGKTGK</sequence>
<dbReference type="EMBL" id="AL766843">
    <property type="protein sequence ID" value="CAD45718.1"/>
    <property type="molecule type" value="Genomic_DNA"/>
</dbReference>
<dbReference type="RefSeq" id="WP_000086620.1">
    <property type="nucleotide sequence ID" value="NC_004368.1"/>
</dbReference>
<dbReference type="SMR" id="Q8E7S6"/>
<dbReference type="GeneID" id="66885033"/>
<dbReference type="KEGG" id="san:rplF"/>
<dbReference type="eggNOG" id="COG0097">
    <property type="taxonomic scope" value="Bacteria"/>
</dbReference>
<dbReference type="HOGENOM" id="CLU_065464_1_2_9"/>
<dbReference type="Proteomes" id="UP000000823">
    <property type="component" value="Chromosome"/>
</dbReference>
<dbReference type="GO" id="GO:0022625">
    <property type="term" value="C:cytosolic large ribosomal subunit"/>
    <property type="evidence" value="ECO:0007669"/>
    <property type="project" value="TreeGrafter"/>
</dbReference>
<dbReference type="GO" id="GO:0019843">
    <property type="term" value="F:rRNA binding"/>
    <property type="evidence" value="ECO:0007669"/>
    <property type="project" value="UniProtKB-UniRule"/>
</dbReference>
<dbReference type="GO" id="GO:0003735">
    <property type="term" value="F:structural constituent of ribosome"/>
    <property type="evidence" value="ECO:0007669"/>
    <property type="project" value="InterPro"/>
</dbReference>
<dbReference type="GO" id="GO:0002181">
    <property type="term" value="P:cytoplasmic translation"/>
    <property type="evidence" value="ECO:0007669"/>
    <property type="project" value="TreeGrafter"/>
</dbReference>
<dbReference type="FunFam" id="3.90.930.12:FF:000001">
    <property type="entry name" value="50S ribosomal protein L6"/>
    <property type="match status" value="1"/>
</dbReference>
<dbReference type="FunFam" id="3.90.930.12:FF:000002">
    <property type="entry name" value="50S ribosomal protein L6"/>
    <property type="match status" value="1"/>
</dbReference>
<dbReference type="Gene3D" id="3.90.930.12">
    <property type="entry name" value="Ribosomal protein L6, alpha-beta domain"/>
    <property type="match status" value="2"/>
</dbReference>
<dbReference type="HAMAP" id="MF_01365_B">
    <property type="entry name" value="Ribosomal_uL6_B"/>
    <property type="match status" value="1"/>
</dbReference>
<dbReference type="InterPro" id="IPR000702">
    <property type="entry name" value="Ribosomal_uL6-like"/>
</dbReference>
<dbReference type="InterPro" id="IPR036789">
    <property type="entry name" value="Ribosomal_uL6-like_a/b-dom_sf"/>
</dbReference>
<dbReference type="InterPro" id="IPR020040">
    <property type="entry name" value="Ribosomal_uL6_a/b-dom"/>
</dbReference>
<dbReference type="InterPro" id="IPR019906">
    <property type="entry name" value="Ribosomal_uL6_bac-type"/>
</dbReference>
<dbReference type="InterPro" id="IPR002358">
    <property type="entry name" value="Ribosomal_uL6_CS"/>
</dbReference>
<dbReference type="NCBIfam" id="TIGR03654">
    <property type="entry name" value="L6_bact"/>
    <property type="match status" value="1"/>
</dbReference>
<dbReference type="PANTHER" id="PTHR11655">
    <property type="entry name" value="60S/50S RIBOSOMAL PROTEIN L6/L9"/>
    <property type="match status" value="1"/>
</dbReference>
<dbReference type="PANTHER" id="PTHR11655:SF14">
    <property type="entry name" value="LARGE RIBOSOMAL SUBUNIT PROTEIN UL6M"/>
    <property type="match status" value="1"/>
</dbReference>
<dbReference type="Pfam" id="PF00347">
    <property type="entry name" value="Ribosomal_L6"/>
    <property type="match status" value="2"/>
</dbReference>
<dbReference type="PIRSF" id="PIRSF002162">
    <property type="entry name" value="Ribosomal_L6"/>
    <property type="match status" value="1"/>
</dbReference>
<dbReference type="PRINTS" id="PR00059">
    <property type="entry name" value="RIBOSOMALL6"/>
</dbReference>
<dbReference type="SUPFAM" id="SSF56053">
    <property type="entry name" value="Ribosomal protein L6"/>
    <property type="match status" value="2"/>
</dbReference>
<dbReference type="PROSITE" id="PS00525">
    <property type="entry name" value="RIBOSOMAL_L6_1"/>
    <property type="match status" value="1"/>
</dbReference>
<protein>
    <recommendedName>
        <fullName evidence="1">Large ribosomal subunit protein uL6</fullName>
    </recommendedName>
    <alternativeName>
        <fullName evidence="2">50S ribosomal protein L6</fullName>
    </alternativeName>
</protein>
<keyword id="KW-0687">Ribonucleoprotein</keyword>
<keyword id="KW-0689">Ribosomal protein</keyword>
<keyword id="KW-0694">RNA-binding</keyword>
<keyword id="KW-0699">rRNA-binding</keyword>
<feature type="chain" id="PRO_0000260941" description="Large ribosomal subunit protein uL6">
    <location>
        <begin position="1"/>
        <end position="178"/>
    </location>
</feature>
<name>RL6_STRA3</name>
<gene>
    <name evidence="1" type="primary">rplF</name>
    <name type="ordered locus">gbs0073</name>
</gene>
<organism>
    <name type="scientific">Streptococcus agalactiae serotype III (strain NEM316)</name>
    <dbReference type="NCBI Taxonomy" id="211110"/>
    <lineage>
        <taxon>Bacteria</taxon>
        <taxon>Bacillati</taxon>
        <taxon>Bacillota</taxon>
        <taxon>Bacilli</taxon>
        <taxon>Lactobacillales</taxon>
        <taxon>Streptococcaceae</taxon>
        <taxon>Streptococcus</taxon>
    </lineage>
</organism>
<accession>Q8E7S6</accession>
<comment type="function">
    <text evidence="1">This protein binds to the 23S rRNA, and is important in its secondary structure. It is located near the subunit interface in the base of the L7/L12 stalk, and near the tRNA binding site of the peptidyltransferase center.</text>
</comment>
<comment type="subunit">
    <text evidence="1">Part of the 50S ribosomal subunit.</text>
</comment>
<comment type="similarity">
    <text evidence="1">Belongs to the universal ribosomal protein uL6 family.</text>
</comment>
<reference key="1">
    <citation type="journal article" date="2002" name="Mol. Microbiol.">
        <title>Genome sequence of Streptococcus agalactiae, a pathogen causing invasive neonatal disease.</title>
        <authorList>
            <person name="Glaser P."/>
            <person name="Rusniok C."/>
            <person name="Buchrieser C."/>
            <person name="Chevalier F."/>
            <person name="Frangeul L."/>
            <person name="Msadek T."/>
            <person name="Zouine M."/>
            <person name="Couve E."/>
            <person name="Lalioui L."/>
            <person name="Poyart C."/>
            <person name="Trieu-Cuot P."/>
            <person name="Kunst F."/>
        </authorList>
    </citation>
    <scope>NUCLEOTIDE SEQUENCE [LARGE SCALE GENOMIC DNA]</scope>
    <source>
        <strain>NEM316</strain>
    </source>
</reference>